<reference key="1">
    <citation type="journal article" date="2003" name="Nat. Genet.">
        <title>Comparative analysis of the genome sequences of Bordetella pertussis, Bordetella parapertussis and Bordetella bronchiseptica.</title>
        <authorList>
            <person name="Parkhill J."/>
            <person name="Sebaihia M."/>
            <person name="Preston A."/>
            <person name="Murphy L.D."/>
            <person name="Thomson N.R."/>
            <person name="Harris D.E."/>
            <person name="Holden M.T.G."/>
            <person name="Churcher C.M."/>
            <person name="Bentley S.D."/>
            <person name="Mungall K.L."/>
            <person name="Cerdeno-Tarraga A.-M."/>
            <person name="Temple L."/>
            <person name="James K.D."/>
            <person name="Harris B."/>
            <person name="Quail M.A."/>
            <person name="Achtman M."/>
            <person name="Atkin R."/>
            <person name="Baker S."/>
            <person name="Basham D."/>
            <person name="Bason N."/>
            <person name="Cherevach I."/>
            <person name="Chillingworth T."/>
            <person name="Collins M."/>
            <person name="Cronin A."/>
            <person name="Davis P."/>
            <person name="Doggett J."/>
            <person name="Feltwell T."/>
            <person name="Goble A."/>
            <person name="Hamlin N."/>
            <person name="Hauser H."/>
            <person name="Holroyd S."/>
            <person name="Jagels K."/>
            <person name="Leather S."/>
            <person name="Moule S."/>
            <person name="Norberczak H."/>
            <person name="O'Neil S."/>
            <person name="Ormond D."/>
            <person name="Price C."/>
            <person name="Rabbinowitsch E."/>
            <person name="Rutter S."/>
            <person name="Sanders M."/>
            <person name="Saunders D."/>
            <person name="Seeger K."/>
            <person name="Sharp S."/>
            <person name="Simmonds M."/>
            <person name="Skelton J."/>
            <person name="Squares R."/>
            <person name="Squares S."/>
            <person name="Stevens K."/>
            <person name="Unwin L."/>
            <person name="Whitehead S."/>
            <person name="Barrell B.G."/>
            <person name="Maskell D.J."/>
        </authorList>
    </citation>
    <scope>NUCLEOTIDE SEQUENCE [LARGE SCALE GENOMIC DNA]</scope>
    <source>
        <strain>ATCC BAA-588 / NCTC 13252 / RB50</strain>
    </source>
</reference>
<organism>
    <name type="scientific">Bordetella bronchiseptica (strain ATCC BAA-588 / NCTC 13252 / RB50)</name>
    <name type="common">Alcaligenes bronchisepticus</name>
    <dbReference type="NCBI Taxonomy" id="257310"/>
    <lineage>
        <taxon>Bacteria</taxon>
        <taxon>Pseudomonadati</taxon>
        <taxon>Pseudomonadota</taxon>
        <taxon>Betaproteobacteria</taxon>
        <taxon>Burkholderiales</taxon>
        <taxon>Alcaligenaceae</taxon>
        <taxon>Bordetella</taxon>
    </lineage>
</organism>
<keyword id="KW-0029">Amino-acid transport</keyword>
<keyword id="KW-0067">ATP-binding</keyword>
<keyword id="KW-0997">Cell inner membrane</keyword>
<keyword id="KW-1003">Cell membrane</keyword>
<keyword id="KW-0472">Membrane</keyword>
<keyword id="KW-0547">Nucleotide-binding</keyword>
<keyword id="KW-1278">Translocase</keyword>
<keyword id="KW-0813">Transport</keyword>
<proteinExistence type="inferred from homology"/>
<evidence type="ECO:0000255" key="1">
    <source>
        <dbReference type="HAMAP-Rule" id="MF_01719"/>
    </source>
</evidence>
<feature type="chain" id="PRO_0000270253" description="Methionine import ATP-binding protein MetN">
    <location>
        <begin position="1"/>
        <end position="362"/>
    </location>
</feature>
<feature type="domain" description="ABC transporter" evidence="1">
    <location>
        <begin position="2"/>
        <end position="241"/>
    </location>
</feature>
<feature type="binding site" evidence="1">
    <location>
        <begin position="38"/>
        <end position="45"/>
    </location>
    <ligand>
        <name>ATP</name>
        <dbReference type="ChEBI" id="CHEBI:30616"/>
    </ligand>
</feature>
<accession>Q7WFU9</accession>
<sequence>MIHIENLSKTYATPHGRFEALRGINLHIQQGEVFGIIGPSGAGKSTLVQCINLLERPDQGSIAIGGQALVGLGEAQLRNQRRRIGMVFQGFNLLARRTVYGNVALPLEIAGVARAEIPARVERLLALVGLEHLRDRYPSQISGGQKQRVGIARALANDPDVLLSDEATSALDPETTHNILALLRDINRKTGVTVVMITHQMEVVREICDRVAVLSHGEVVELGSTREVFAAPRHEVTRAMVSAATASDLSEATLAAVKQRIDALAAAEPGRAVRLWRLSLKGVAAGEPLWSDLAREFALDVSLVQARVEDIQGVAVGTLFVLAQGAPHAVKDALAALAAREITVEEIAHEPATDRSAYHVAA</sequence>
<gene>
    <name evidence="1" type="primary">metN</name>
    <name type="ordered locus">BB4171</name>
</gene>
<protein>
    <recommendedName>
        <fullName evidence="1">Methionine import ATP-binding protein MetN</fullName>
        <ecNumber evidence="1">7.4.2.11</ecNumber>
    </recommendedName>
</protein>
<dbReference type="EC" id="7.4.2.11" evidence="1"/>
<dbReference type="EMBL" id="BX640449">
    <property type="protein sequence ID" value="CAE34535.1"/>
    <property type="molecule type" value="Genomic_DNA"/>
</dbReference>
<dbReference type="RefSeq" id="WP_003814544.1">
    <property type="nucleotide sequence ID" value="NC_002927.3"/>
</dbReference>
<dbReference type="SMR" id="Q7WFU9"/>
<dbReference type="KEGG" id="bbr:BB4171"/>
<dbReference type="eggNOG" id="COG1135">
    <property type="taxonomic scope" value="Bacteria"/>
</dbReference>
<dbReference type="HOGENOM" id="CLU_000604_1_3_4"/>
<dbReference type="Proteomes" id="UP000001027">
    <property type="component" value="Chromosome"/>
</dbReference>
<dbReference type="GO" id="GO:0005886">
    <property type="term" value="C:plasma membrane"/>
    <property type="evidence" value="ECO:0007669"/>
    <property type="project" value="UniProtKB-SubCell"/>
</dbReference>
<dbReference type="GO" id="GO:0033232">
    <property type="term" value="F:ABC-type D-methionine transporter activity"/>
    <property type="evidence" value="ECO:0007669"/>
    <property type="project" value="UniProtKB-EC"/>
</dbReference>
<dbReference type="GO" id="GO:0005524">
    <property type="term" value="F:ATP binding"/>
    <property type="evidence" value="ECO:0007669"/>
    <property type="project" value="UniProtKB-KW"/>
</dbReference>
<dbReference type="GO" id="GO:0016887">
    <property type="term" value="F:ATP hydrolysis activity"/>
    <property type="evidence" value="ECO:0007669"/>
    <property type="project" value="InterPro"/>
</dbReference>
<dbReference type="CDD" id="cd03258">
    <property type="entry name" value="ABC_MetN_methionine_transporter"/>
    <property type="match status" value="1"/>
</dbReference>
<dbReference type="FunFam" id="3.40.50.300:FF:000056">
    <property type="entry name" value="Cell division ATP-binding protein FtsE"/>
    <property type="match status" value="1"/>
</dbReference>
<dbReference type="Gene3D" id="3.30.70.260">
    <property type="match status" value="1"/>
</dbReference>
<dbReference type="Gene3D" id="3.40.50.300">
    <property type="entry name" value="P-loop containing nucleotide triphosphate hydrolases"/>
    <property type="match status" value="1"/>
</dbReference>
<dbReference type="InterPro" id="IPR003593">
    <property type="entry name" value="AAA+_ATPase"/>
</dbReference>
<dbReference type="InterPro" id="IPR003439">
    <property type="entry name" value="ABC_transporter-like_ATP-bd"/>
</dbReference>
<dbReference type="InterPro" id="IPR017871">
    <property type="entry name" value="ABC_transporter-like_CS"/>
</dbReference>
<dbReference type="InterPro" id="IPR045865">
    <property type="entry name" value="ACT-like_dom_sf"/>
</dbReference>
<dbReference type="InterPro" id="IPR041701">
    <property type="entry name" value="MetN_ABC"/>
</dbReference>
<dbReference type="InterPro" id="IPR050086">
    <property type="entry name" value="MetN_ABC_transporter-like"/>
</dbReference>
<dbReference type="InterPro" id="IPR018449">
    <property type="entry name" value="NIL_domain"/>
</dbReference>
<dbReference type="InterPro" id="IPR027417">
    <property type="entry name" value="P-loop_NTPase"/>
</dbReference>
<dbReference type="PANTHER" id="PTHR43166">
    <property type="entry name" value="AMINO ACID IMPORT ATP-BINDING PROTEIN"/>
    <property type="match status" value="1"/>
</dbReference>
<dbReference type="PANTHER" id="PTHR43166:SF30">
    <property type="entry name" value="METHIONINE IMPORT ATP-BINDING PROTEIN METN"/>
    <property type="match status" value="1"/>
</dbReference>
<dbReference type="Pfam" id="PF00005">
    <property type="entry name" value="ABC_tran"/>
    <property type="match status" value="1"/>
</dbReference>
<dbReference type="Pfam" id="PF09383">
    <property type="entry name" value="NIL"/>
    <property type="match status" value="1"/>
</dbReference>
<dbReference type="SMART" id="SM00382">
    <property type="entry name" value="AAA"/>
    <property type="match status" value="1"/>
</dbReference>
<dbReference type="SMART" id="SM00930">
    <property type="entry name" value="NIL"/>
    <property type="match status" value="1"/>
</dbReference>
<dbReference type="SUPFAM" id="SSF55021">
    <property type="entry name" value="ACT-like"/>
    <property type="match status" value="1"/>
</dbReference>
<dbReference type="SUPFAM" id="SSF52540">
    <property type="entry name" value="P-loop containing nucleoside triphosphate hydrolases"/>
    <property type="match status" value="1"/>
</dbReference>
<dbReference type="PROSITE" id="PS00211">
    <property type="entry name" value="ABC_TRANSPORTER_1"/>
    <property type="match status" value="1"/>
</dbReference>
<dbReference type="PROSITE" id="PS50893">
    <property type="entry name" value="ABC_TRANSPORTER_2"/>
    <property type="match status" value="1"/>
</dbReference>
<dbReference type="PROSITE" id="PS51264">
    <property type="entry name" value="METN"/>
    <property type="match status" value="1"/>
</dbReference>
<name>METN_BORBR</name>
<comment type="function">
    <text evidence="1">Part of the ABC transporter complex MetNIQ involved in methionine import. Responsible for energy coupling to the transport system.</text>
</comment>
<comment type="catalytic activity">
    <reaction evidence="1">
        <text>L-methionine(out) + ATP + H2O = L-methionine(in) + ADP + phosphate + H(+)</text>
        <dbReference type="Rhea" id="RHEA:29779"/>
        <dbReference type="ChEBI" id="CHEBI:15377"/>
        <dbReference type="ChEBI" id="CHEBI:15378"/>
        <dbReference type="ChEBI" id="CHEBI:30616"/>
        <dbReference type="ChEBI" id="CHEBI:43474"/>
        <dbReference type="ChEBI" id="CHEBI:57844"/>
        <dbReference type="ChEBI" id="CHEBI:456216"/>
        <dbReference type="EC" id="7.4.2.11"/>
    </reaction>
</comment>
<comment type="catalytic activity">
    <reaction evidence="1">
        <text>D-methionine(out) + ATP + H2O = D-methionine(in) + ADP + phosphate + H(+)</text>
        <dbReference type="Rhea" id="RHEA:29767"/>
        <dbReference type="ChEBI" id="CHEBI:15377"/>
        <dbReference type="ChEBI" id="CHEBI:15378"/>
        <dbReference type="ChEBI" id="CHEBI:30616"/>
        <dbReference type="ChEBI" id="CHEBI:43474"/>
        <dbReference type="ChEBI" id="CHEBI:57932"/>
        <dbReference type="ChEBI" id="CHEBI:456216"/>
        <dbReference type="EC" id="7.4.2.11"/>
    </reaction>
</comment>
<comment type="subunit">
    <text evidence="1">The complex is composed of two ATP-binding proteins (MetN), two transmembrane proteins (MetI) and a solute-binding protein (MetQ).</text>
</comment>
<comment type="subcellular location">
    <subcellularLocation>
        <location evidence="1">Cell inner membrane</location>
        <topology evidence="1">Peripheral membrane protein</topology>
    </subcellularLocation>
</comment>
<comment type="similarity">
    <text evidence="1">Belongs to the ABC transporter superfamily. Methionine importer (TC 3.A.1.24) family.</text>
</comment>